<name>BPHC_GEOG3</name>
<protein>
    <recommendedName>
        <fullName>Manganese-dependent 2,3-dihydroxybiphenyl 1,2-dioxygenase</fullName>
        <ecNumber>1.13.11.39</ecNumber>
    </recommendedName>
    <alternativeName>
        <fullName>Mn(II)-dependent 2,3-dihydroxybiphenyl 1,2-dioxygenase</fullName>
    </alternativeName>
    <alternativeName>
        <fullName>Mn(II)-dependent 23OHBP oxygenase</fullName>
    </alternativeName>
</protein>
<dbReference type="EC" id="1.13.11.39"/>
<dbReference type="EMBL" id="AB092521">
    <property type="protein sequence ID" value="BAC23089.1"/>
    <property type="molecule type" value="Genomic_DNA"/>
</dbReference>
<dbReference type="RefSeq" id="WP_020961664.1">
    <property type="nucleotide sequence ID" value="NC_022092.1"/>
</dbReference>
<dbReference type="SMR" id="Q8GR45"/>
<dbReference type="KEGG" id="ag:BAC23089"/>
<dbReference type="OrthoDB" id="317332at2"/>
<dbReference type="BRENDA" id="1.13.11.39">
    <property type="organism ID" value="691"/>
</dbReference>
<dbReference type="UniPathway" id="UPA00155">
    <property type="reaction ID" value="UER00252"/>
</dbReference>
<dbReference type="GO" id="GO:0018583">
    <property type="term" value="F:biphenyl-2,3-diol 1,2-dioxygenase activity"/>
    <property type="evidence" value="ECO:0007669"/>
    <property type="project" value="UniProtKB-EC"/>
</dbReference>
<dbReference type="GO" id="GO:0046872">
    <property type="term" value="F:metal ion binding"/>
    <property type="evidence" value="ECO:0007669"/>
    <property type="project" value="UniProtKB-KW"/>
</dbReference>
<dbReference type="GO" id="GO:0009056">
    <property type="term" value="P:catabolic process"/>
    <property type="evidence" value="ECO:0007669"/>
    <property type="project" value="UniProtKB-KW"/>
</dbReference>
<dbReference type="CDD" id="cd09014">
    <property type="entry name" value="BphC-JF8_C_like"/>
    <property type="match status" value="1"/>
</dbReference>
<dbReference type="CDD" id="cd09013">
    <property type="entry name" value="BphC-JF8_N_like"/>
    <property type="match status" value="1"/>
</dbReference>
<dbReference type="Gene3D" id="3.10.180.10">
    <property type="entry name" value="2,3-Dihydroxybiphenyl 1,2-Dioxygenase, domain 1"/>
    <property type="match status" value="2"/>
</dbReference>
<dbReference type="InterPro" id="IPR051332">
    <property type="entry name" value="Fosfomycin_Res_Enzymes"/>
</dbReference>
<dbReference type="InterPro" id="IPR029068">
    <property type="entry name" value="Glyas_Bleomycin-R_OHBP_Dase"/>
</dbReference>
<dbReference type="InterPro" id="IPR004360">
    <property type="entry name" value="Glyas_Fos-R_dOase_dom"/>
</dbReference>
<dbReference type="InterPro" id="IPR037523">
    <property type="entry name" value="VOC"/>
</dbReference>
<dbReference type="InterPro" id="IPR054560">
    <property type="entry name" value="XylE-like_N"/>
</dbReference>
<dbReference type="PANTHER" id="PTHR36113:SF6">
    <property type="entry name" value="FOSFOMYCIN RESISTANCE PROTEIN FOSX"/>
    <property type="match status" value="1"/>
</dbReference>
<dbReference type="PANTHER" id="PTHR36113">
    <property type="entry name" value="LYASE, PUTATIVE-RELATED-RELATED"/>
    <property type="match status" value="1"/>
</dbReference>
<dbReference type="Pfam" id="PF22247">
    <property type="entry name" value="Diox-like_N"/>
    <property type="match status" value="1"/>
</dbReference>
<dbReference type="Pfam" id="PF00903">
    <property type="entry name" value="Glyoxalase"/>
    <property type="match status" value="1"/>
</dbReference>
<dbReference type="SUPFAM" id="SSF54593">
    <property type="entry name" value="Glyoxalase/Bleomycin resistance protein/Dihydroxybiphenyl dioxygenase"/>
    <property type="match status" value="1"/>
</dbReference>
<dbReference type="PROSITE" id="PS51819">
    <property type="entry name" value="VOC"/>
    <property type="match status" value="2"/>
</dbReference>
<accession>Q8GR45</accession>
<organism>
    <name type="scientific">Geobacillus genomosp. 3</name>
    <dbReference type="NCBI Taxonomy" id="1921421"/>
    <lineage>
        <taxon>Bacteria</taxon>
        <taxon>Bacillati</taxon>
        <taxon>Bacillota</taxon>
        <taxon>Bacilli</taxon>
        <taxon>Bacillales</taxon>
        <taxon>Anoxybacillaceae</taxon>
        <taxon>Geobacillus</taxon>
    </lineage>
</organism>
<feature type="chain" id="PRO_0000085040" description="Manganese-dependent 2,3-dihydroxybiphenyl 1,2-dioxygenase">
    <location>
        <begin position="1"/>
        <end position="315"/>
    </location>
</feature>
<feature type="domain" description="VOC 1" evidence="2">
    <location>
        <begin position="7"/>
        <end position="121"/>
    </location>
</feature>
<feature type="domain" description="VOC 2" evidence="2">
    <location>
        <begin position="150"/>
        <end position="273"/>
    </location>
</feature>
<feature type="binding site" evidence="1">
    <location>
        <position position="153"/>
    </location>
    <ligand>
        <name>Mn(2+)</name>
        <dbReference type="ChEBI" id="CHEBI:29035"/>
    </ligand>
</feature>
<feature type="binding site" evidence="1">
    <location>
        <position position="216"/>
    </location>
    <ligand>
        <name>Mn(2+)</name>
        <dbReference type="ChEBI" id="CHEBI:29035"/>
    </ligand>
</feature>
<feature type="binding site" evidence="1">
    <location>
        <position position="269"/>
    </location>
    <ligand>
        <name>Mn(2+)</name>
        <dbReference type="ChEBI" id="CHEBI:29035"/>
    </ligand>
</feature>
<gene>
    <name type="primary">bphC</name>
</gene>
<reference key="1">
    <citation type="journal article" date="2003" name="J. Biol. Chem.">
        <title>Characterization of a novel thermostable Mn(II)-dependent 2,3-dihydroxybiphenyl 1,2-dioxygenase from a polychlorinated biphenyl- and naphthalene-degrading Bacillus sp. JF8.</title>
        <authorList>
            <person name="Hatta T."/>
            <person name="Mukerjee-Dhar G."/>
            <person name="Damborsky J."/>
            <person name="Kiyohara H."/>
            <person name="Kimbara K."/>
        </authorList>
    </citation>
    <scope>NUCLEOTIDE SEQUENCE [GENOMIC DNA]</scope>
    <scope>PROTEIN SEQUENCE OF 1-41</scope>
    <scope>BIOPHYSICOCHEMICAL PROPERTIES</scope>
    <scope>SUBUNIT</scope>
    <scope>COFACTOR</scope>
    <scope>CHARACTERIZATION</scope>
    <source>
        <strain>JF8</strain>
    </source>
</reference>
<evidence type="ECO:0000250" key="1"/>
<evidence type="ECO:0000255" key="2">
    <source>
        <dbReference type="PROSITE-ProRule" id="PRU01163"/>
    </source>
</evidence>
<evidence type="ECO:0000269" key="3">
    <source>
    </source>
</evidence>
<evidence type="ECO:0000305" key="4"/>
<proteinExistence type="evidence at protein level"/>
<keyword id="KW-0058">Aromatic hydrocarbons catabolism</keyword>
<keyword id="KW-0223">Dioxygenase</keyword>
<keyword id="KW-0903">Direct protein sequencing</keyword>
<keyword id="KW-0464">Manganese</keyword>
<keyword id="KW-0479">Metal-binding</keyword>
<keyword id="KW-0560">Oxidoreductase</keyword>
<keyword id="KW-0677">Repeat</keyword>
<sequence>MTAEIAKFGHIALITPNLEKSVWFFRDIVGLEEVDRQGDTIFLRAWGDWEHHTLSLTPGNRARVDHIAWRTKRPEDVETFAEQLKAKGTEVQWIEPGEEKGQGKAIRFRLPNGYPFEIYYDVEKPKAPEGKKSRLKNNVYRPSYGIAPRRIDHVNVWTTNPSEIHQWLKDNMGFKMREYIRLNNGFVAGGWMSVTPLVHDIGVMVDPKGQPNRLHHFAYYLDNVTDILRAADILREHDITIEMGGPGRHGISQAFFLYVKDPGSGHRLELFSGGYLIFDPDWEPIEWQEHELQEGLIWYGPEMKPGGPMDDTTEC</sequence>
<comment type="function">
    <text>Catalyzes the meta-cleavage of the hydroxylated biphenyl ring. The enzyme can oxidize a wide range of substrates, and the substrate preference order is 2,3-dihydroxybiphenyl &gt; 3-methylcatechol &gt; catechol &gt; 4-methylcatechol &gt; 4-chlorocatechol.</text>
</comment>
<comment type="catalytic activity">
    <reaction>
        <text>biphenyl-2,3-diol + O2 = 2-hydroxy-6-oxo-6-phenylhexa-2,4-dienoate + H(+)</text>
        <dbReference type="Rhea" id="RHEA:14413"/>
        <dbReference type="ChEBI" id="CHEBI:15378"/>
        <dbReference type="ChEBI" id="CHEBI:15379"/>
        <dbReference type="ChEBI" id="CHEBI:16205"/>
        <dbReference type="ChEBI" id="CHEBI:58284"/>
        <dbReference type="EC" id="1.13.11.39"/>
    </reaction>
</comment>
<comment type="cofactor">
    <cofactor evidence="3">
        <name>Mn(2+)</name>
        <dbReference type="ChEBI" id="CHEBI:29035"/>
    </cofactor>
    <text evidence="3">Binds 1 Mn(2+) ion per subunit.</text>
</comment>
<comment type="biophysicochemical properties">
    <kinetics>
        <KM evidence="3">0.095 uM for 2,3-dihydroxybiphenyl (at 60 degrees Celsius and pH 7.5)</KM>
        <KM evidence="3">1 uM for 3-methylcatechol (at 60 degrees Celsius and pH 7.5)</KM>
        <KM evidence="3">25 uM for 4-chlorocatechol (at 60 degrees Celsius and pH 7.5)</KM>
        <KM evidence="3">103 uM for catechol (at 60 degrees Celsius and pH 7.5)</KM>
        <KM evidence="3">111 uM for 4-methylcatechol (at 60 degrees Celsius and pH 7.5)</KM>
        <Vmax evidence="3">5.7 umol/min/mg enzyme with 2,3-dihydroxybiphenyl as substrate (at 60 degrees Celsius and pH 7.5)</Vmax>
        <Vmax evidence="3">3.4 umol/min/mg enzyme with 3-methylcatechol as substrate (at 60 degrees Celsius and pH 7.5)</Vmax>
        <Vmax evidence="3">1.8 umol/min/mg enzyme with catechol as substrate (at 60 degrees Celsius and pH 7.5)</Vmax>
        <Vmax evidence="3">1.3 umol/min/mg enzyme with 4-methylcatechol as substrate (at 60 degrees Celsius and pH 7.5)</Vmax>
        <Vmax evidence="3">0.68 umol/min/mg enzyme with 4-chlorocatechol as substrate (at 60 degrees Celsius and pH 7.5)</Vmax>
    </kinetics>
    <phDependence>
        <text evidence="3">Optimum pH is 7.5.</text>
    </phDependence>
    <temperatureDependence>
        <text evidence="3">Optimum temperature is 85 degrees Celsius.</text>
    </temperatureDependence>
</comment>
<comment type="pathway">
    <text>Xenobiotic degradation; biphenyl degradation; 2-hydroxy-2,4-pentadienoate and benzoate from biphenyl: step 3/4.</text>
</comment>
<comment type="subunit">
    <text evidence="3">Homotetramer.</text>
</comment>
<comment type="similarity">
    <text evidence="4">Belongs to the extradiol ring-cleavage dioxygenase family.</text>
</comment>